<feature type="chain" id="PRO_0000277016" description="Small ribosomal subunit protein uS4c">
    <location>
        <begin position="1"/>
        <end position="197"/>
    </location>
</feature>
<feature type="domain" description="S4 RNA-binding">
    <location>
        <begin position="92"/>
        <end position="153"/>
    </location>
</feature>
<proteinExistence type="inferred from homology"/>
<geneLocation type="chloroplast"/>
<dbReference type="EMBL" id="CR954199">
    <property type="protein sequence ID" value="CAL36345.1"/>
    <property type="molecule type" value="Genomic_DNA"/>
</dbReference>
<dbReference type="RefSeq" id="YP_717223.1">
    <property type="nucleotide sequence ID" value="NC_008289.1"/>
</dbReference>
<dbReference type="SMR" id="Q0P3N2"/>
<dbReference type="FunCoup" id="Q0P3N2">
    <property type="interactions" value="170"/>
</dbReference>
<dbReference type="STRING" id="70448.Q0P3N2"/>
<dbReference type="GeneID" id="4238844"/>
<dbReference type="KEGG" id="ota:OstapCp20"/>
<dbReference type="eggNOG" id="KOG3301">
    <property type="taxonomic scope" value="Eukaryota"/>
</dbReference>
<dbReference type="InParanoid" id="Q0P3N2"/>
<dbReference type="Proteomes" id="UP000009170">
    <property type="component" value="Chloroplast"/>
</dbReference>
<dbReference type="GO" id="GO:0009507">
    <property type="term" value="C:chloroplast"/>
    <property type="evidence" value="ECO:0007669"/>
    <property type="project" value="UniProtKB-SubCell"/>
</dbReference>
<dbReference type="GO" id="GO:0015935">
    <property type="term" value="C:small ribosomal subunit"/>
    <property type="evidence" value="ECO:0007669"/>
    <property type="project" value="InterPro"/>
</dbReference>
<dbReference type="GO" id="GO:0019843">
    <property type="term" value="F:rRNA binding"/>
    <property type="evidence" value="ECO:0007669"/>
    <property type="project" value="UniProtKB-UniRule"/>
</dbReference>
<dbReference type="GO" id="GO:0003735">
    <property type="term" value="F:structural constituent of ribosome"/>
    <property type="evidence" value="ECO:0007669"/>
    <property type="project" value="InterPro"/>
</dbReference>
<dbReference type="GO" id="GO:0042274">
    <property type="term" value="P:ribosomal small subunit biogenesis"/>
    <property type="evidence" value="ECO:0007669"/>
    <property type="project" value="TreeGrafter"/>
</dbReference>
<dbReference type="GO" id="GO:0006412">
    <property type="term" value="P:translation"/>
    <property type="evidence" value="ECO:0007669"/>
    <property type="project" value="UniProtKB-UniRule"/>
</dbReference>
<dbReference type="CDD" id="cd00165">
    <property type="entry name" value="S4"/>
    <property type="match status" value="1"/>
</dbReference>
<dbReference type="FunFam" id="3.10.290.10:FF:000001">
    <property type="entry name" value="30S ribosomal protein S4"/>
    <property type="match status" value="1"/>
</dbReference>
<dbReference type="FunFam" id="1.10.1050.10:FF:000002">
    <property type="entry name" value="30S ribosomal protein S4, chloroplastic"/>
    <property type="match status" value="1"/>
</dbReference>
<dbReference type="Gene3D" id="1.10.1050.10">
    <property type="entry name" value="Ribosomal Protein S4 Delta 41, Chain A, domain 1"/>
    <property type="match status" value="1"/>
</dbReference>
<dbReference type="Gene3D" id="3.10.290.10">
    <property type="entry name" value="RNA-binding S4 domain"/>
    <property type="match status" value="1"/>
</dbReference>
<dbReference type="HAMAP" id="MF_01306_B">
    <property type="entry name" value="Ribosomal_uS4_B"/>
    <property type="match status" value="1"/>
</dbReference>
<dbReference type="InterPro" id="IPR022801">
    <property type="entry name" value="Ribosomal_uS4"/>
</dbReference>
<dbReference type="InterPro" id="IPR005709">
    <property type="entry name" value="Ribosomal_uS4_bac-type"/>
</dbReference>
<dbReference type="InterPro" id="IPR001912">
    <property type="entry name" value="Ribosomal_uS4_N"/>
</dbReference>
<dbReference type="InterPro" id="IPR002942">
    <property type="entry name" value="S4_RNA-bd"/>
</dbReference>
<dbReference type="InterPro" id="IPR036986">
    <property type="entry name" value="S4_RNA-bd_sf"/>
</dbReference>
<dbReference type="NCBIfam" id="NF003717">
    <property type="entry name" value="PRK05327.1"/>
    <property type="match status" value="1"/>
</dbReference>
<dbReference type="NCBIfam" id="TIGR01017">
    <property type="entry name" value="rpsD_bact"/>
    <property type="match status" value="1"/>
</dbReference>
<dbReference type="PANTHER" id="PTHR11831">
    <property type="entry name" value="30S 40S RIBOSOMAL PROTEIN"/>
    <property type="match status" value="1"/>
</dbReference>
<dbReference type="PANTHER" id="PTHR11831:SF4">
    <property type="entry name" value="SMALL RIBOSOMAL SUBUNIT PROTEIN US4M"/>
    <property type="match status" value="1"/>
</dbReference>
<dbReference type="Pfam" id="PF00163">
    <property type="entry name" value="Ribosomal_S4"/>
    <property type="match status" value="1"/>
</dbReference>
<dbReference type="Pfam" id="PF01479">
    <property type="entry name" value="S4"/>
    <property type="match status" value="1"/>
</dbReference>
<dbReference type="SMART" id="SM01390">
    <property type="entry name" value="Ribosomal_S4"/>
    <property type="match status" value="1"/>
</dbReference>
<dbReference type="SMART" id="SM00363">
    <property type="entry name" value="S4"/>
    <property type="match status" value="1"/>
</dbReference>
<dbReference type="SUPFAM" id="SSF55174">
    <property type="entry name" value="Alpha-L RNA-binding motif"/>
    <property type="match status" value="1"/>
</dbReference>
<dbReference type="PROSITE" id="PS50889">
    <property type="entry name" value="S4"/>
    <property type="match status" value="1"/>
</dbReference>
<evidence type="ECO:0000250" key="1"/>
<evidence type="ECO:0000305" key="2"/>
<sequence>MARYRGPRVKIVRRLGELPGLTTKIPNRNYPAGQHGPSSGMTKMSQYRVRLQEKQKLRYNYGVSEKQLLSYVRRARRMKGPTGELLLQMLEMRLDAVVYRLGFAPTIRAARQYVSHGLVTVNGQAVTIPSYQCSVGEVIKSNSAPIVEHAKTFGGVVPSHLSVDKNNATGKVERNVTRSQIGLTVNELLIIEFYSRK</sequence>
<keyword id="KW-0150">Chloroplast</keyword>
<keyword id="KW-0934">Plastid</keyword>
<keyword id="KW-1185">Reference proteome</keyword>
<keyword id="KW-0687">Ribonucleoprotein</keyword>
<keyword id="KW-0689">Ribosomal protein</keyword>
<keyword id="KW-0694">RNA-binding</keyword>
<keyword id="KW-0699">rRNA-binding</keyword>
<accession>Q0P3N2</accession>
<name>RR4_OSTTA</name>
<reference key="1">
    <citation type="journal article" date="2007" name="Mol. Biol. Evol.">
        <title>The complete chloroplast and mitochondrial DNA sequence of Ostreococcus tauri: organelle genomes of the smallest eukaryote are examples of compaction.</title>
        <authorList>
            <person name="Robbens S."/>
            <person name="Derelle E."/>
            <person name="Ferraz C."/>
            <person name="Wuyts J."/>
            <person name="Moreau H."/>
            <person name="Van de Peer Y."/>
        </authorList>
    </citation>
    <scope>NUCLEOTIDE SEQUENCE [LARGE SCALE GENOMIC DNA]</scope>
    <source>
        <strain>OTTH0595</strain>
    </source>
</reference>
<organism>
    <name type="scientific">Ostreococcus tauri</name>
    <dbReference type="NCBI Taxonomy" id="70448"/>
    <lineage>
        <taxon>Eukaryota</taxon>
        <taxon>Viridiplantae</taxon>
        <taxon>Chlorophyta</taxon>
        <taxon>Mamiellophyceae</taxon>
        <taxon>Mamiellales</taxon>
        <taxon>Bathycoccaceae</taxon>
        <taxon>Ostreococcus</taxon>
    </lineage>
</organism>
<protein>
    <recommendedName>
        <fullName evidence="2">Small ribosomal subunit protein uS4c</fullName>
    </recommendedName>
    <alternativeName>
        <fullName>30S ribosomal protein S4, chloroplastic</fullName>
    </alternativeName>
</protein>
<gene>
    <name type="primary">rps4</name>
    <name type="ordered locus">OtCpg00200</name>
</gene>
<comment type="function">
    <text evidence="1">One of the primary rRNA binding proteins, it binds directly to 16S rRNA where it nucleates assembly of the body of the 30S subunit.</text>
</comment>
<comment type="function">
    <text evidence="1">With S5 and S12 plays an important role in translational accuracy.</text>
</comment>
<comment type="subunit">
    <text evidence="1">Part of the 30S ribosomal subunit. Contacts protein S5. The interaction surface between S4 and S5 is involved in control of translational fidelity (By similarity).</text>
</comment>
<comment type="subcellular location">
    <subcellularLocation>
        <location>Plastid</location>
        <location>Chloroplast</location>
    </subcellularLocation>
</comment>
<comment type="similarity">
    <text evidence="2">Belongs to the universal ribosomal protein uS4 family.</text>
</comment>